<proteinExistence type="evidence at protein level"/>
<protein>
    <recommendedName>
        <fullName>Citropin-2.1.3</fullName>
    </recommendedName>
    <component>
        <recommendedName>
            <fullName>Citropin-2.1.2</fullName>
        </recommendedName>
    </component>
    <component>
        <recommendedName>
            <fullName>Citropin-2.1.1</fullName>
        </recommendedName>
    </component>
    <component>
        <recommendedName>
            <fullName>Citropin-2.1</fullName>
        </recommendedName>
    </component>
</protein>
<organism>
    <name type="scientific">Ranoidea citropa</name>
    <name type="common">Australian Blue Mountains tree frog</name>
    <name type="synonym">Litoria citropa</name>
    <dbReference type="NCBI Taxonomy" id="94770"/>
    <lineage>
        <taxon>Eukaryota</taxon>
        <taxon>Metazoa</taxon>
        <taxon>Chordata</taxon>
        <taxon>Craniata</taxon>
        <taxon>Vertebrata</taxon>
        <taxon>Euteleostomi</taxon>
        <taxon>Amphibia</taxon>
        <taxon>Batrachia</taxon>
        <taxon>Anura</taxon>
        <taxon>Neobatrachia</taxon>
        <taxon>Hyloidea</taxon>
        <taxon>Hylidae</taxon>
        <taxon>Pelodryadinae</taxon>
        <taxon>Ranoidea</taxon>
    </lineage>
</organism>
<dbReference type="GO" id="GO:0005576">
    <property type="term" value="C:extracellular region"/>
    <property type="evidence" value="ECO:0007669"/>
    <property type="project" value="UniProtKB-SubCell"/>
</dbReference>
<dbReference type="GO" id="GO:0006952">
    <property type="term" value="P:defense response"/>
    <property type="evidence" value="ECO:0007669"/>
    <property type="project" value="UniProtKB-KW"/>
</dbReference>
<dbReference type="InterPro" id="IPR032021">
    <property type="entry name" value="Frog_Litoria"/>
</dbReference>
<dbReference type="Pfam" id="PF16049">
    <property type="entry name" value="Antimicrobial24"/>
    <property type="match status" value="1"/>
</dbReference>
<keyword id="KW-0878">Amphibian defense peptide</keyword>
<keyword id="KW-0903">Direct protein sequencing</keyword>
<keyword id="KW-0964">Secreted</keyword>
<feature type="peptide" id="PRO_0000010197" description="Citropin-2.1.3">
    <location>
        <begin position="1"/>
        <end position="26"/>
    </location>
</feature>
<feature type="peptide" id="PRO_0000010198" description="Citropin-2.1.2">
    <location>
        <begin position="1"/>
        <end position="25"/>
    </location>
</feature>
<feature type="peptide" id="PRO_0000010199" description="Citropin-2.1.1">
    <location>
        <begin position="1"/>
        <end position="23"/>
    </location>
</feature>
<feature type="peptide" id="PRO_0000010200" description="Citropin-2.1">
    <location>
        <begin position="1"/>
        <end position="22"/>
    </location>
</feature>
<reference key="1">
    <citation type="journal article" date="1999" name="Eur. J. Biochem.">
        <title>Host defence peptides from the skin glands of the Australian blue mountains tree-frog Litoria citropa. Solution structure of the antibacterial peptide citropin 1.1.</title>
        <authorList>
            <person name="Wegener K.L."/>
            <person name="Wabnitz P.A."/>
            <person name="Carver J.A."/>
            <person name="Bowie J.H."/>
            <person name="Chia B.C.S."/>
            <person name="Wallace J.C."/>
            <person name="Tyler M.J."/>
        </authorList>
    </citation>
    <scope>PROTEIN SEQUENCE</scope>
    <source>
        <tissue>Skin secretion</tissue>
    </source>
</reference>
<name>CT21_RANCI</name>
<accession>P81847</accession>
<accession>P81848</accession>
<accession>P81849</accession>
<accession>P81850</accession>
<sequence length="26" mass="2519">GLIGSIGKALGGLLVDVLKPKLQAAS</sequence>
<comment type="subcellular location">
    <subcellularLocation>
        <location>Secreted</location>
    </subcellularLocation>
</comment>
<comment type="tissue specificity">
    <text>Expressed by the dorsal and submental skin glands.</text>
</comment>